<reference key="1">
    <citation type="journal article" date="1998" name="J. Biol. Chem.">
        <title>Cloning and characterization of a novel binding factor (GMEB-2) of the glucocorticoid modulatory element.</title>
        <authorList>
            <person name="Zeng H."/>
            <person name="Jackson D.A."/>
            <person name="Oshima H."/>
            <person name="Simons S.S. Jr."/>
        </authorList>
    </citation>
    <scope>NUCLEOTIDE SEQUENCE [MRNA] (ISOFORMS 1 AND 2)</scope>
    <scope>PROTEIN SEQUENCE OF 278-294</scope>
    <source>
        <tissue>Hepatoma</tissue>
    </source>
</reference>
<reference key="2">
    <citation type="journal article" date="2000" name="Nucleic Acids Res.">
        <title>Genomic organization of human GMEB-1 and rat GMEB-2: structural conservation of two multifunctional proteins.</title>
        <authorList>
            <person name="Zeng H."/>
            <person name="Kaul S."/>
            <person name="Simons S.S. Jr."/>
        </authorList>
    </citation>
    <scope>NUCLEOTIDE SEQUENCE [MRNA] (ISOFORMS 2; 3 AND 4)</scope>
</reference>
<reference key="3">
    <citation type="journal article" date="1995" name="J. Biol. Chem.">
        <title>The factor binding to the glucocorticoid modulatory element of the tyrosine aminotransferase gene is a novel and ubiquitous heteromeric complex.</title>
        <authorList>
            <person name="Oshima H."/>
            <person name="Szapary D."/>
            <person name="Simons S.S. Jr."/>
        </authorList>
    </citation>
    <scope>PROTEIN SEQUENCE OF 155-168; 242-261 AND 267-275</scope>
    <source>
        <tissue>Hepatoma</tissue>
    </source>
</reference>
<evidence type="ECO:0000250" key="1"/>
<evidence type="ECO:0000250" key="2">
    <source>
        <dbReference type="UniProtKB" id="Q9UKD1"/>
    </source>
</evidence>
<evidence type="ECO:0000255" key="3"/>
<evidence type="ECO:0000255" key="4">
    <source>
        <dbReference type="PROSITE-ProRule" id="PRU00185"/>
    </source>
</evidence>
<evidence type="ECO:0000303" key="5">
    <source>
    </source>
</evidence>
<evidence type="ECO:0000303" key="6">
    <source>
    </source>
</evidence>
<organism>
    <name type="scientific">Rattus norvegicus</name>
    <name type="common">Rat</name>
    <dbReference type="NCBI Taxonomy" id="10116"/>
    <lineage>
        <taxon>Eukaryota</taxon>
        <taxon>Metazoa</taxon>
        <taxon>Chordata</taxon>
        <taxon>Craniata</taxon>
        <taxon>Vertebrata</taxon>
        <taxon>Euteleostomi</taxon>
        <taxon>Mammalia</taxon>
        <taxon>Eutheria</taxon>
        <taxon>Euarchontoglires</taxon>
        <taxon>Glires</taxon>
        <taxon>Rodentia</taxon>
        <taxon>Myomorpha</taxon>
        <taxon>Muroidea</taxon>
        <taxon>Muridae</taxon>
        <taxon>Murinae</taxon>
        <taxon>Rattus</taxon>
    </lineage>
</organism>
<protein>
    <recommendedName>
        <fullName>Glucocorticoid modulatory element-binding protein 2</fullName>
        <shortName>GMEB-2</shortName>
    </recommendedName>
</protein>
<sequence>MATPDVSVHMEEVVVVTTPDTAVDGSGVEEVKTVLVTTNLAPHGGDLTEDNMETENAAAAACAFTASSQLKEAVLVKMAEEGENLEAEIVYPITCGDSRANLIWRKFVCPGINVKCVQYDEHVISPKEFVHLAGKSTLKDWKRAIRMNGIMLRKIMDSGELDFYQHDKVCSNTCRSTKIDLSGARVSLSSPTSTEYIPLTPAAADVNGSPATITIETCEDPGDWTTTIGDDTFAFWRGLKDAGLLDEVIQEFQQELEETMKGLQQRVQDPPLQLRDAVLLNNIVQNFGMLDLVKKVLASHKCQMDRSREQYARDLAALEQQCDEHRRRAKELKHKSQHLSNVLMTLTPVSLPSPMKRPRLARATSGPAAMASQVLTQSAQIALGPGMPMSQLTSVPLGKVVSTLPSTVLGKGSPQAAPASSPASPLLGGYTVLASSGSTFPSTVEIHPDTSSLTVLSTAAMQDGTTVLKVVSPLQLLTLPGLGPTLQNVAQASPAGSTIVTMPTAAATGPEEHTATIEVAAVAEDHEQK</sequence>
<gene>
    <name type="primary">Gmeb2</name>
</gene>
<proteinExistence type="evidence at protein level"/>
<dbReference type="EMBL" id="AF059273">
    <property type="protein sequence ID" value="AAC64001.1"/>
    <property type="molecule type" value="mRNA"/>
</dbReference>
<dbReference type="EMBL" id="AF205778">
    <property type="protein sequence ID" value="AAF65537.1"/>
    <property type="molecule type" value="mRNA"/>
</dbReference>
<dbReference type="EMBL" id="AF205779">
    <property type="protein sequence ID" value="AAF65538.1"/>
    <property type="molecule type" value="mRNA"/>
</dbReference>
<dbReference type="EMBL" id="AF205780">
    <property type="protein sequence ID" value="AAF65539.1"/>
    <property type="molecule type" value="mRNA"/>
</dbReference>
<dbReference type="RefSeq" id="NP_113991.1">
    <property type="nucleotide sequence ID" value="NM_031803.1"/>
</dbReference>
<dbReference type="SMR" id="O88873"/>
<dbReference type="FunCoup" id="O88873">
    <property type="interactions" value="2110"/>
</dbReference>
<dbReference type="IntAct" id="O88873">
    <property type="interactions" value="1"/>
</dbReference>
<dbReference type="STRING" id="10116.ENSRNOP00000018237"/>
<dbReference type="PhosphoSitePlus" id="O88873"/>
<dbReference type="PaxDb" id="10116-ENSRNOP00000018237"/>
<dbReference type="PeptideAtlas" id="O88873"/>
<dbReference type="GeneID" id="83635"/>
<dbReference type="KEGG" id="rno:83635"/>
<dbReference type="UCSC" id="RGD:620481">
    <molecule id="O88873-1"/>
    <property type="organism name" value="rat"/>
</dbReference>
<dbReference type="AGR" id="RGD:620481"/>
<dbReference type="CTD" id="26205"/>
<dbReference type="RGD" id="620481">
    <property type="gene designation" value="Gmeb2"/>
</dbReference>
<dbReference type="eggNOG" id="KOG4333">
    <property type="taxonomic scope" value="Eukaryota"/>
</dbReference>
<dbReference type="InParanoid" id="O88873"/>
<dbReference type="PhylomeDB" id="O88873"/>
<dbReference type="PRO" id="PR:O88873"/>
<dbReference type="Proteomes" id="UP000002494">
    <property type="component" value="Unplaced"/>
</dbReference>
<dbReference type="GO" id="GO:0005737">
    <property type="term" value="C:cytoplasm"/>
    <property type="evidence" value="ECO:0007669"/>
    <property type="project" value="UniProtKB-SubCell"/>
</dbReference>
<dbReference type="GO" id="GO:0005634">
    <property type="term" value="C:nucleus"/>
    <property type="evidence" value="ECO:0000318"/>
    <property type="project" value="GO_Central"/>
</dbReference>
<dbReference type="GO" id="GO:0001228">
    <property type="term" value="F:DNA-binding transcription activator activity, RNA polymerase II-specific"/>
    <property type="evidence" value="ECO:0000314"/>
    <property type="project" value="NTNU_SB"/>
</dbReference>
<dbReference type="GO" id="GO:0000981">
    <property type="term" value="F:DNA-binding transcription factor activity, RNA polymerase II-specific"/>
    <property type="evidence" value="ECO:0000314"/>
    <property type="project" value="NTNU_SB"/>
</dbReference>
<dbReference type="GO" id="GO:0042802">
    <property type="term" value="F:identical protein binding"/>
    <property type="evidence" value="ECO:0000266"/>
    <property type="project" value="RGD"/>
</dbReference>
<dbReference type="GO" id="GO:0046872">
    <property type="term" value="F:metal ion binding"/>
    <property type="evidence" value="ECO:0007669"/>
    <property type="project" value="UniProtKB-KW"/>
</dbReference>
<dbReference type="GO" id="GO:0000978">
    <property type="term" value="F:RNA polymerase II cis-regulatory region sequence-specific DNA binding"/>
    <property type="evidence" value="ECO:0000318"/>
    <property type="project" value="GO_Central"/>
</dbReference>
<dbReference type="GO" id="GO:0043565">
    <property type="term" value="F:sequence-specific DNA binding"/>
    <property type="evidence" value="ECO:0000314"/>
    <property type="project" value="NTNU_SB"/>
</dbReference>
<dbReference type="GO" id="GO:1990837">
    <property type="term" value="F:sequence-specific double-stranded DNA binding"/>
    <property type="evidence" value="ECO:0000266"/>
    <property type="project" value="RGD"/>
</dbReference>
<dbReference type="GO" id="GO:0045944">
    <property type="term" value="P:positive regulation of transcription by RNA polymerase II"/>
    <property type="evidence" value="ECO:0000314"/>
    <property type="project" value="NTNU_SB"/>
</dbReference>
<dbReference type="GO" id="GO:0006357">
    <property type="term" value="P:regulation of transcription by RNA polymerase II"/>
    <property type="evidence" value="ECO:0000314"/>
    <property type="project" value="NTNU_SB"/>
</dbReference>
<dbReference type="FunFam" id="3.10.390.10:FF:000003">
    <property type="entry name" value="glucocorticoid modulatory element-binding protein 1 isoform X2"/>
    <property type="match status" value="1"/>
</dbReference>
<dbReference type="Gene3D" id="3.10.390.10">
    <property type="entry name" value="SAND domain-like"/>
    <property type="match status" value="1"/>
</dbReference>
<dbReference type="InterPro" id="IPR010919">
    <property type="entry name" value="SAND-like_dom_sf"/>
</dbReference>
<dbReference type="InterPro" id="IPR000770">
    <property type="entry name" value="SAND_dom"/>
</dbReference>
<dbReference type="PANTHER" id="PTHR10417">
    <property type="entry name" value="GLUCOCORTICOID MODULATORY ELEMENT-BINDING PROTEIN"/>
    <property type="match status" value="1"/>
</dbReference>
<dbReference type="PANTHER" id="PTHR10417:SF2">
    <property type="entry name" value="GLUCOCORTICOID MODULATORY ELEMENT-BINDING PROTEIN 2"/>
    <property type="match status" value="1"/>
</dbReference>
<dbReference type="Pfam" id="PF01342">
    <property type="entry name" value="SAND"/>
    <property type="match status" value="1"/>
</dbReference>
<dbReference type="SMART" id="SM00258">
    <property type="entry name" value="SAND"/>
    <property type="match status" value="1"/>
</dbReference>
<dbReference type="SUPFAM" id="SSF63763">
    <property type="entry name" value="SAND domain-like"/>
    <property type="match status" value="1"/>
</dbReference>
<dbReference type="PROSITE" id="PS50864">
    <property type="entry name" value="SAND"/>
    <property type="match status" value="1"/>
</dbReference>
<accession>O88873</accession>
<accession>Q9JL86</accession>
<accession>Q9JL87</accession>
<accession>Q9JL88</accession>
<accession>Q9QUZ7</accession>
<feature type="chain" id="PRO_0000074094" description="Glucocorticoid modulatory element-binding protein 2">
    <location>
        <begin position="1"/>
        <end position="529"/>
    </location>
</feature>
<feature type="domain" description="SAND" evidence="4">
    <location>
        <begin position="80"/>
        <end position="162"/>
    </location>
</feature>
<feature type="coiled-coil region" evidence="3">
    <location>
        <begin position="244"/>
        <end position="347"/>
    </location>
</feature>
<feature type="binding site" evidence="1">
    <location>
        <position position="109"/>
    </location>
    <ligand>
        <name>Zn(2+)</name>
        <dbReference type="ChEBI" id="CHEBI:29105"/>
    </ligand>
</feature>
<feature type="binding site" evidence="1">
    <location>
        <position position="135"/>
    </location>
    <ligand>
        <name>DNA</name>
        <dbReference type="ChEBI" id="CHEBI:16991"/>
    </ligand>
</feature>
<feature type="binding site" evidence="1">
    <location>
        <position position="139"/>
    </location>
    <ligand>
        <name>DNA</name>
        <dbReference type="ChEBI" id="CHEBI:16991"/>
    </ligand>
</feature>
<feature type="binding site" evidence="1">
    <location>
        <position position="142"/>
    </location>
    <ligand>
        <name>DNA</name>
        <dbReference type="ChEBI" id="CHEBI:16991"/>
    </ligand>
</feature>
<feature type="binding site" evidence="1">
    <location>
        <position position="153"/>
    </location>
    <ligand>
        <name>DNA</name>
        <dbReference type="ChEBI" id="CHEBI:16991"/>
    </ligand>
</feature>
<feature type="binding site" evidence="1">
    <location>
        <position position="166"/>
    </location>
    <ligand>
        <name>Zn(2+)</name>
        <dbReference type="ChEBI" id="CHEBI:29105"/>
    </ligand>
</feature>
<feature type="binding site" evidence="1">
    <location>
        <position position="170"/>
    </location>
    <ligand>
        <name>Zn(2+)</name>
        <dbReference type="ChEBI" id="CHEBI:29105"/>
    </ligand>
</feature>
<feature type="binding site" evidence="1">
    <location>
        <position position="174"/>
    </location>
    <ligand>
        <name>Zn(2+)</name>
        <dbReference type="ChEBI" id="CHEBI:29105"/>
    </ligand>
</feature>
<feature type="modified residue" description="Phosphoserine" evidence="2">
    <location>
        <position position="372"/>
    </location>
</feature>
<feature type="cross-link" description="Glycyl lysine isopeptide (Lys-Gly) (interchain with G-Cter in SUMO1); alternate" evidence="2">
    <location>
        <position position="154"/>
    </location>
</feature>
<feature type="cross-link" description="Glycyl lysine isopeptide (Lys-Gly) (interchain with G-Cter in SUMO2); alternate" evidence="2">
    <location>
        <position position="154"/>
    </location>
</feature>
<feature type="splice variant" id="VSP_005971" description="In isoform 2, isoform 3 and isoform 4." evidence="5 6">
    <original>CA</original>
    <variation>AAA</variation>
    <location>
        <begin position="62"/>
        <end position="63"/>
    </location>
</feature>
<feature type="splice variant" id="VSP_005972" description="In isoform 4." evidence="5">
    <original>ALEQQCDEHRRRAKELKHKSQHLSNVLM</original>
    <variation>GPPRPFLAGQRRPNSPICMEPSILEEEV</variation>
    <location>
        <begin position="317"/>
        <end position="344"/>
    </location>
</feature>
<feature type="splice variant" id="VSP_005973" description="In isoform 4." evidence="5">
    <location>
        <begin position="345"/>
        <end position="529"/>
    </location>
</feature>
<feature type="splice variant" id="VSP_005974" description="In isoform 3." evidence="5">
    <original>TQSA</original>
    <variation>QGRF</variation>
    <location>
        <begin position="376"/>
        <end position="379"/>
    </location>
</feature>
<feature type="splice variant" id="VSP_005975" description="In isoform 3." evidence="5">
    <location>
        <begin position="380"/>
        <end position="529"/>
    </location>
</feature>
<feature type="splice variant" id="VSP_005976" description="In isoform 2." evidence="5 6">
    <original>VSPLQLLTLPGLGPT</original>
    <variation>ITALPRVYTCLSGSS</variation>
    <location>
        <begin position="471"/>
        <end position="485"/>
    </location>
</feature>
<feature type="splice variant" id="VSP_005977" description="In isoform 2." evidence="5 6">
    <location>
        <begin position="486"/>
        <end position="529"/>
    </location>
</feature>
<keyword id="KW-0025">Alternative splicing</keyword>
<keyword id="KW-0175">Coiled coil</keyword>
<keyword id="KW-0963">Cytoplasm</keyword>
<keyword id="KW-0903">Direct protein sequencing</keyword>
<keyword id="KW-0238">DNA-binding</keyword>
<keyword id="KW-1017">Isopeptide bond</keyword>
<keyword id="KW-0479">Metal-binding</keyword>
<keyword id="KW-0539">Nucleus</keyword>
<keyword id="KW-0597">Phosphoprotein</keyword>
<keyword id="KW-1185">Reference proteome</keyword>
<keyword id="KW-0804">Transcription</keyword>
<keyword id="KW-0805">Transcription regulation</keyword>
<keyword id="KW-0832">Ubl conjugation</keyword>
<keyword id="KW-0862">Zinc</keyword>
<comment type="function">
    <text evidence="1">Trans-acting factor that binds to glucocorticoid modulatory elements (GME) present in the TAT (tyrosine aminotransferase) promoter and increases sensitivity to low concentrations of glucocorticoids. Also binds to the transferrin receptor promoter (By similarity).</text>
</comment>
<comment type="subunit">
    <text evidence="1">Homodimer, and heterodimer of GMEB1 and GMEB2. Interacts with the glucocorticoid receptor (NR3C1). May interact with CREB-binding protein (CBP) (By similarity).</text>
</comment>
<comment type="interaction">
    <interactant intactId="EBI-25780616">
        <id>O88873</id>
    </interactant>
    <interactant intactId="EBI-21554939">
        <id>Q9Y692-2</id>
        <label>GMEB1</label>
    </interactant>
    <organismsDiffer>true</organismsDiffer>
    <experiments>5</experiments>
</comment>
<comment type="subcellular location">
    <subcellularLocation>
        <location>Nucleus</location>
    </subcellularLocation>
    <subcellularLocation>
        <location>Cytoplasm</location>
    </subcellularLocation>
    <text>May be also cytoplasmic.</text>
</comment>
<comment type="alternative products">
    <event type="alternative splicing"/>
    <isoform>
        <id>O88873-1</id>
        <name>1</name>
        <sequence type="displayed"/>
    </isoform>
    <isoform>
        <id>O88873-2</id>
        <name>2</name>
        <name>2'</name>
        <sequence type="described" ref="VSP_005971 VSP_005976 VSP_005977"/>
    </isoform>
    <isoform>
        <id>O88873-3</id>
        <name>3</name>
        <name>2a</name>
        <sequence type="described" ref="VSP_005971 VSP_005974 VSP_005975"/>
    </isoform>
    <isoform>
        <id>O88873-4</id>
        <name>4</name>
        <name>2b</name>
        <sequence type="described" ref="VSP_005971 VSP_005972 VSP_005973"/>
    </isoform>
</comment>
<name>GMEB2_RAT</name>